<gene>
    <name evidence="1" type="primary">fabZ</name>
    <name type="ordered locus">Psyc_1527</name>
</gene>
<protein>
    <recommendedName>
        <fullName evidence="1">3-hydroxyacyl-[acyl-carrier-protein] dehydratase FabZ</fullName>
        <ecNumber evidence="1">4.2.1.59</ecNumber>
    </recommendedName>
    <alternativeName>
        <fullName evidence="1">(3R)-hydroxymyristoyl-[acyl-carrier-protein] dehydratase</fullName>
        <shortName evidence="1">(3R)-hydroxymyristoyl-ACP dehydrase</shortName>
    </alternativeName>
    <alternativeName>
        <fullName evidence="1">Beta-hydroxyacyl-ACP dehydratase</fullName>
    </alternativeName>
</protein>
<comment type="function">
    <text evidence="1">Involved in unsaturated fatty acids biosynthesis. Catalyzes the dehydration of short chain beta-hydroxyacyl-ACPs and long chain saturated and unsaturated beta-hydroxyacyl-ACPs.</text>
</comment>
<comment type="catalytic activity">
    <reaction evidence="1">
        <text>a (3R)-hydroxyacyl-[ACP] = a (2E)-enoyl-[ACP] + H2O</text>
        <dbReference type="Rhea" id="RHEA:13097"/>
        <dbReference type="Rhea" id="RHEA-COMP:9925"/>
        <dbReference type="Rhea" id="RHEA-COMP:9945"/>
        <dbReference type="ChEBI" id="CHEBI:15377"/>
        <dbReference type="ChEBI" id="CHEBI:78784"/>
        <dbReference type="ChEBI" id="CHEBI:78827"/>
        <dbReference type="EC" id="4.2.1.59"/>
    </reaction>
</comment>
<comment type="subcellular location">
    <subcellularLocation>
        <location evidence="1">Cytoplasm</location>
    </subcellularLocation>
</comment>
<comment type="similarity">
    <text evidence="1">Belongs to the thioester dehydratase family. FabZ subfamily.</text>
</comment>
<comment type="sequence caution" evidence="2">
    <conflict type="erroneous initiation">
        <sequence resource="EMBL-CDS" id="AAZ19375"/>
    </conflict>
</comment>
<reference key="1">
    <citation type="journal article" date="2010" name="Appl. Environ. Microbiol.">
        <title>The genome sequence of Psychrobacter arcticus 273-4, a psychroactive Siberian permafrost bacterium, reveals mechanisms for adaptation to low-temperature growth.</title>
        <authorList>
            <person name="Ayala-del-Rio H.L."/>
            <person name="Chain P.S."/>
            <person name="Grzymski J.J."/>
            <person name="Ponder M.A."/>
            <person name="Ivanova N."/>
            <person name="Bergholz P.W."/>
            <person name="Di Bartolo G."/>
            <person name="Hauser L."/>
            <person name="Land M."/>
            <person name="Bakermans C."/>
            <person name="Rodrigues D."/>
            <person name="Klappenbach J."/>
            <person name="Zarka D."/>
            <person name="Larimer F."/>
            <person name="Richardson P."/>
            <person name="Murray A."/>
            <person name="Thomashow M."/>
            <person name="Tiedje J.M."/>
        </authorList>
    </citation>
    <scope>NUCLEOTIDE SEQUENCE [LARGE SCALE GENOMIC DNA]</scope>
    <source>
        <strain>DSM 17307 / VKM B-2377 / 273-4</strain>
    </source>
</reference>
<organism>
    <name type="scientific">Psychrobacter arcticus (strain DSM 17307 / VKM B-2377 / 273-4)</name>
    <dbReference type="NCBI Taxonomy" id="259536"/>
    <lineage>
        <taxon>Bacteria</taxon>
        <taxon>Pseudomonadati</taxon>
        <taxon>Pseudomonadota</taxon>
        <taxon>Gammaproteobacteria</taxon>
        <taxon>Moraxellales</taxon>
        <taxon>Moraxellaceae</taxon>
        <taxon>Psychrobacter</taxon>
    </lineage>
</organism>
<feature type="chain" id="PRO_0000230829" description="3-hydroxyacyl-[acyl-carrier-protein] dehydratase FabZ">
    <location>
        <begin position="1"/>
        <end position="146"/>
    </location>
</feature>
<feature type="active site" evidence="1">
    <location>
        <position position="49"/>
    </location>
</feature>
<dbReference type="EC" id="4.2.1.59" evidence="1"/>
<dbReference type="EMBL" id="CP000082">
    <property type="protein sequence ID" value="AAZ19375.1"/>
    <property type="status" value="ALT_INIT"/>
    <property type="molecule type" value="Genomic_DNA"/>
</dbReference>
<dbReference type="SMR" id="Q4FRI3"/>
<dbReference type="STRING" id="259536.Psyc_1527"/>
<dbReference type="KEGG" id="par:Psyc_1527"/>
<dbReference type="eggNOG" id="COG0764">
    <property type="taxonomic scope" value="Bacteria"/>
</dbReference>
<dbReference type="HOGENOM" id="CLU_078912_1_2_6"/>
<dbReference type="Proteomes" id="UP000000546">
    <property type="component" value="Chromosome"/>
</dbReference>
<dbReference type="GO" id="GO:0005737">
    <property type="term" value="C:cytoplasm"/>
    <property type="evidence" value="ECO:0007669"/>
    <property type="project" value="UniProtKB-SubCell"/>
</dbReference>
<dbReference type="GO" id="GO:0016020">
    <property type="term" value="C:membrane"/>
    <property type="evidence" value="ECO:0007669"/>
    <property type="project" value="GOC"/>
</dbReference>
<dbReference type="GO" id="GO:0019171">
    <property type="term" value="F:(3R)-hydroxyacyl-[acyl-carrier-protein] dehydratase activity"/>
    <property type="evidence" value="ECO:0007669"/>
    <property type="project" value="UniProtKB-EC"/>
</dbReference>
<dbReference type="GO" id="GO:0006633">
    <property type="term" value="P:fatty acid biosynthetic process"/>
    <property type="evidence" value="ECO:0007669"/>
    <property type="project" value="UniProtKB-UniRule"/>
</dbReference>
<dbReference type="GO" id="GO:0009245">
    <property type="term" value="P:lipid A biosynthetic process"/>
    <property type="evidence" value="ECO:0007669"/>
    <property type="project" value="UniProtKB-UniRule"/>
</dbReference>
<dbReference type="CDD" id="cd01288">
    <property type="entry name" value="FabZ"/>
    <property type="match status" value="1"/>
</dbReference>
<dbReference type="FunFam" id="3.10.129.10:FF:000001">
    <property type="entry name" value="3-hydroxyacyl-[acyl-carrier-protein] dehydratase FabZ"/>
    <property type="match status" value="1"/>
</dbReference>
<dbReference type="Gene3D" id="3.10.129.10">
    <property type="entry name" value="Hotdog Thioesterase"/>
    <property type="match status" value="1"/>
</dbReference>
<dbReference type="HAMAP" id="MF_00406">
    <property type="entry name" value="FabZ"/>
    <property type="match status" value="1"/>
</dbReference>
<dbReference type="InterPro" id="IPR013114">
    <property type="entry name" value="FabA_FabZ"/>
</dbReference>
<dbReference type="InterPro" id="IPR010084">
    <property type="entry name" value="FabZ"/>
</dbReference>
<dbReference type="InterPro" id="IPR029069">
    <property type="entry name" value="HotDog_dom_sf"/>
</dbReference>
<dbReference type="NCBIfam" id="TIGR01750">
    <property type="entry name" value="fabZ"/>
    <property type="match status" value="1"/>
</dbReference>
<dbReference type="NCBIfam" id="NF000582">
    <property type="entry name" value="PRK00006.1"/>
    <property type="match status" value="1"/>
</dbReference>
<dbReference type="PANTHER" id="PTHR30272">
    <property type="entry name" value="3-HYDROXYACYL-[ACYL-CARRIER-PROTEIN] DEHYDRATASE"/>
    <property type="match status" value="1"/>
</dbReference>
<dbReference type="PANTHER" id="PTHR30272:SF1">
    <property type="entry name" value="3-HYDROXYACYL-[ACYL-CARRIER-PROTEIN] DEHYDRATASE"/>
    <property type="match status" value="1"/>
</dbReference>
<dbReference type="Pfam" id="PF07977">
    <property type="entry name" value="FabA"/>
    <property type="match status" value="1"/>
</dbReference>
<dbReference type="SUPFAM" id="SSF54637">
    <property type="entry name" value="Thioesterase/thiol ester dehydrase-isomerase"/>
    <property type="match status" value="1"/>
</dbReference>
<keyword id="KW-0963">Cytoplasm</keyword>
<keyword id="KW-0441">Lipid A biosynthesis</keyword>
<keyword id="KW-0444">Lipid biosynthesis</keyword>
<keyword id="KW-0443">Lipid metabolism</keyword>
<keyword id="KW-0456">Lyase</keyword>
<keyword id="KW-1185">Reference proteome</keyword>
<name>FABZ_PSYA2</name>
<evidence type="ECO:0000255" key="1">
    <source>
        <dbReference type="HAMAP-Rule" id="MF_00406"/>
    </source>
</evidence>
<evidence type="ECO:0000305" key="2"/>
<sequence>MPLTYHTLKHYLPHRYPFLLVDKIVACTPGECITGIKNVTINEEFFNGHFPDEPIMPGVLMVECMAQVSGVLGFISAGLTAEDGYLYLFAGVDKVRFKRRVIPGDQLIIRSKIVMQKQGIYKFDCTVHVEDELAVSAQIMIARQEQ</sequence>
<proteinExistence type="inferred from homology"/>
<accession>Q4FRI3</accession>